<dbReference type="EMBL" id="CU329671">
    <property type="protein sequence ID" value="CAB08773.1"/>
    <property type="molecule type" value="Genomic_DNA"/>
</dbReference>
<dbReference type="PIR" id="T40009">
    <property type="entry name" value="T40009"/>
</dbReference>
<dbReference type="RefSeq" id="NP_596353.1">
    <property type="nucleotide sequence ID" value="NM_001022273.2"/>
</dbReference>
<dbReference type="BioGRID" id="277010">
    <property type="interactions" value="5"/>
</dbReference>
<dbReference type="FunCoup" id="P87155">
    <property type="interactions" value="416"/>
</dbReference>
<dbReference type="STRING" id="284812.P87155"/>
<dbReference type="PaxDb" id="4896-SPBC25H2.14.1"/>
<dbReference type="EnsemblFungi" id="SPBC25H2.14.1">
    <property type="protein sequence ID" value="SPBC25H2.14.1:pep"/>
    <property type="gene ID" value="SPBC25H2.14"/>
</dbReference>
<dbReference type="GeneID" id="2540482"/>
<dbReference type="KEGG" id="spo:2540482"/>
<dbReference type="PomBase" id="SPBC25H2.14">
    <property type="gene designation" value="mug16"/>
</dbReference>
<dbReference type="VEuPathDB" id="FungiDB:SPBC25H2.14"/>
<dbReference type="eggNOG" id="KOG3012">
    <property type="taxonomic scope" value="Eukaryota"/>
</dbReference>
<dbReference type="HOGENOM" id="CLU_066239_1_2_1"/>
<dbReference type="InParanoid" id="P87155"/>
<dbReference type="OMA" id="YRNFMYR"/>
<dbReference type="PhylomeDB" id="P87155"/>
<dbReference type="PRO" id="PR:P87155"/>
<dbReference type="Proteomes" id="UP000002485">
    <property type="component" value="Chromosome II"/>
</dbReference>
<dbReference type="GO" id="GO:0005783">
    <property type="term" value="C:endoplasmic reticulum"/>
    <property type="evidence" value="ECO:0007005"/>
    <property type="project" value="PomBase"/>
</dbReference>
<dbReference type="GO" id="GO:0005789">
    <property type="term" value="C:endoplasmic reticulum membrane"/>
    <property type="evidence" value="ECO:0007669"/>
    <property type="project" value="UniProtKB-SubCell"/>
</dbReference>
<dbReference type="GO" id="GO:0000139">
    <property type="term" value="C:Golgi membrane"/>
    <property type="evidence" value="ECO:0000318"/>
    <property type="project" value="GO_Central"/>
</dbReference>
<dbReference type="GO" id="GO:0051321">
    <property type="term" value="P:meiotic cell cycle"/>
    <property type="evidence" value="ECO:0007669"/>
    <property type="project" value="UniProtKB-KW"/>
</dbReference>
<dbReference type="InterPro" id="IPR007881">
    <property type="entry name" value="UNC-50"/>
</dbReference>
<dbReference type="PANTHER" id="PTHR12841">
    <property type="entry name" value="PROTEIN UNC-50 HOMOLOG"/>
    <property type="match status" value="1"/>
</dbReference>
<dbReference type="PANTHER" id="PTHR12841:SF6">
    <property type="entry name" value="PROTEIN UNC-50 HOMOLOG"/>
    <property type="match status" value="1"/>
</dbReference>
<dbReference type="Pfam" id="PF05216">
    <property type="entry name" value="UNC-50"/>
    <property type="match status" value="1"/>
</dbReference>
<proteinExistence type="evidence at protein level"/>
<organism>
    <name type="scientific">Schizosaccharomyces pombe (strain 972 / ATCC 24843)</name>
    <name type="common">Fission yeast</name>
    <dbReference type="NCBI Taxonomy" id="284812"/>
    <lineage>
        <taxon>Eukaryota</taxon>
        <taxon>Fungi</taxon>
        <taxon>Dikarya</taxon>
        <taxon>Ascomycota</taxon>
        <taxon>Taphrinomycotina</taxon>
        <taxon>Schizosaccharomycetes</taxon>
        <taxon>Schizosaccharomycetales</taxon>
        <taxon>Schizosaccharomycetaceae</taxon>
        <taxon>Schizosaccharomyces</taxon>
    </lineage>
</organism>
<accession>P87155</accession>
<gene>
    <name type="primary">mug16</name>
    <name type="ORF">SPBC25H2.14</name>
</gene>
<evidence type="ECO:0000255" key="1"/>
<evidence type="ECO:0000269" key="2">
    <source>
    </source>
</evidence>
<evidence type="ECO:0000269" key="3">
    <source>
    </source>
</evidence>
<evidence type="ECO:0000305" key="4"/>
<sequence>MSRSFRNGFRLLKLSQMDFERAWWDMANLFRAPRRVYRSITLRKQNINRYGREDFSFIVLFSCMIVISALLWALFYMNTPKGYVTTITFMLFVDFGAVGVIMATMYYFIAKRFLMKSNDTILSSTDYQLEWNYCFDVHCNSFFPSFVLLYVIQLFLLPVITRDNFISLFMGNTLYLVALCYYSYLTFIGYQILPFLKNTHALLLPIPMFFIMWALSLLGFNVPKHVVDVYFGKSA</sequence>
<reference key="1">
    <citation type="journal article" date="2002" name="Nature">
        <title>The genome sequence of Schizosaccharomyces pombe.</title>
        <authorList>
            <person name="Wood V."/>
            <person name="Gwilliam R."/>
            <person name="Rajandream M.A."/>
            <person name="Lyne M.H."/>
            <person name="Lyne R."/>
            <person name="Stewart A."/>
            <person name="Sgouros J.G."/>
            <person name="Peat N."/>
            <person name="Hayles J."/>
            <person name="Baker S.G."/>
            <person name="Basham D."/>
            <person name="Bowman S."/>
            <person name="Brooks K."/>
            <person name="Brown D."/>
            <person name="Brown S."/>
            <person name="Chillingworth T."/>
            <person name="Churcher C.M."/>
            <person name="Collins M."/>
            <person name="Connor R."/>
            <person name="Cronin A."/>
            <person name="Davis P."/>
            <person name="Feltwell T."/>
            <person name="Fraser A."/>
            <person name="Gentles S."/>
            <person name="Goble A."/>
            <person name="Hamlin N."/>
            <person name="Harris D.E."/>
            <person name="Hidalgo J."/>
            <person name="Hodgson G."/>
            <person name="Holroyd S."/>
            <person name="Hornsby T."/>
            <person name="Howarth S."/>
            <person name="Huckle E.J."/>
            <person name="Hunt S."/>
            <person name="Jagels K."/>
            <person name="James K.D."/>
            <person name="Jones L."/>
            <person name="Jones M."/>
            <person name="Leather S."/>
            <person name="McDonald S."/>
            <person name="McLean J."/>
            <person name="Mooney P."/>
            <person name="Moule S."/>
            <person name="Mungall K.L."/>
            <person name="Murphy L.D."/>
            <person name="Niblett D."/>
            <person name="Odell C."/>
            <person name="Oliver K."/>
            <person name="O'Neil S."/>
            <person name="Pearson D."/>
            <person name="Quail M.A."/>
            <person name="Rabbinowitsch E."/>
            <person name="Rutherford K.M."/>
            <person name="Rutter S."/>
            <person name="Saunders D."/>
            <person name="Seeger K."/>
            <person name="Sharp S."/>
            <person name="Skelton J."/>
            <person name="Simmonds M.N."/>
            <person name="Squares R."/>
            <person name="Squares S."/>
            <person name="Stevens K."/>
            <person name="Taylor K."/>
            <person name="Taylor R.G."/>
            <person name="Tivey A."/>
            <person name="Walsh S.V."/>
            <person name="Warren T."/>
            <person name="Whitehead S."/>
            <person name="Woodward J.R."/>
            <person name="Volckaert G."/>
            <person name="Aert R."/>
            <person name="Robben J."/>
            <person name="Grymonprez B."/>
            <person name="Weltjens I."/>
            <person name="Vanstreels E."/>
            <person name="Rieger M."/>
            <person name="Schaefer M."/>
            <person name="Mueller-Auer S."/>
            <person name="Gabel C."/>
            <person name="Fuchs M."/>
            <person name="Duesterhoeft A."/>
            <person name="Fritzc C."/>
            <person name="Holzer E."/>
            <person name="Moestl D."/>
            <person name="Hilbert H."/>
            <person name="Borzym K."/>
            <person name="Langer I."/>
            <person name="Beck A."/>
            <person name="Lehrach H."/>
            <person name="Reinhardt R."/>
            <person name="Pohl T.M."/>
            <person name="Eger P."/>
            <person name="Zimmermann W."/>
            <person name="Wedler H."/>
            <person name="Wambutt R."/>
            <person name="Purnelle B."/>
            <person name="Goffeau A."/>
            <person name="Cadieu E."/>
            <person name="Dreano S."/>
            <person name="Gloux S."/>
            <person name="Lelaure V."/>
            <person name="Mottier S."/>
            <person name="Galibert F."/>
            <person name="Aves S.J."/>
            <person name="Xiang Z."/>
            <person name="Hunt C."/>
            <person name="Moore K."/>
            <person name="Hurst S.M."/>
            <person name="Lucas M."/>
            <person name="Rochet M."/>
            <person name="Gaillardin C."/>
            <person name="Tallada V.A."/>
            <person name="Garzon A."/>
            <person name="Thode G."/>
            <person name="Daga R.R."/>
            <person name="Cruzado L."/>
            <person name="Jimenez J."/>
            <person name="Sanchez M."/>
            <person name="del Rey F."/>
            <person name="Benito J."/>
            <person name="Dominguez A."/>
            <person name="Revuelta J.L."/>
            <person name="Moreno S."/>
            <person name="Armstrong J."/>
            <person name="Forsburg S.L."/>
            <person name="Cerutti L."/>
            <person name="Lowe T."/>
            <person name="McCombie W.R."/>
            <person name="Paulsen I."/>
            <person name="Potashkin J."/>
            <person name="Shpakovski G.V."/>
            <person name="Ussery D."/>
            <person name="Barrell B.G."/>
            <person name="Nurse P."/>
        </authorList>
    </citation>
    <scope>NUCLEOTIDE SEQUENCE [LARGE SCALE GENOMIC DNA]</scope>
    <source>
        <strain>972 / ATCC 24843</strain>
    </source>
</reference>
<reference key="2">
    <citation type="journal article" date="2005" name="Curr. Biol.">
        <title>A large-scale screen in S. pombe identifies seven novel genes required for critical meiotic events.</title>
        <authorList>
            <person name="Martin-Castellanos C."/>
            <person name="Blanco M."/>
            <person name="Rozalen A.E."/>
            <person name="Perez-Hidalgo L."/>
            <person name="Garcia A.I."/>
            <person name="Conde F."/>
            <person name="Mata J."/>
            <person name="Ellermeier C."/>
            <person name="Davis L."/>
            <person name="San-Segundo P."/>
            <person name="Smith G.R."/>
            <person name="Moreno S."/>
        </authorList>
    </citation>
    <scope>FUNCTION IN MEIOSIS</scope>
</reference>
<reference key="3">
    <citation type="journal article" date="2006" name="Nat. Biotechnol.">
        <title>ORFeome cloning and global analysis of protein localization in the fission yeast Schizosaccharomyces pombe.</title>
        <authorList>
            <person name="Matsuyama A."/>
            <person name="Arai R."/>
            <person name="Yashiroda Y."/>
            <person name="Shirai A."/>
            <person name="Kamata A."/>
            <person name="Sekido S."/>
            <person name="Kobayashi Y."/>
            <person name="Hashimoto A."/>
            <person name="Hamamoto M."/>
            <person name="Hiraoka Y."/>
            <person name="Horinouchi S."/>
            <person name="Yoshida M."/>
        </authorList>
    </citation>
    <scope>SUBCELLULAR LOCATION [LARGE SCALE ANALYSIS]</scope>
</reference>
<protein>
    <recommendedName>
        <fullName>Protein GMH1 homolog</fullName>
    </recommendedName>
    <alternativeName>
        <fullName>Meiotically up-regulated gene 16 protein</fullName>
    </alternativeName>
</protein>
<keyword id="KW-0256">Endoplasmic reticulum</keyword>
<keyword id="KW-0469">Meiosis</keyword>
<keyword id="KW-0472">Membrane</keyword>
<keyword id="KW-1185">Reference proteome</keyword>
<keyword id="KW-0812">Transmembrane</keyword>
<keyword id="KW-1133">Transmembrane helix</keyword>
<feature type="chain" id="PRO_0000278494" description="Protein GMH1 homolog">
    <location>
        <begin position="1"/>
        <end position="235"/>
    </location>
</feature>
<feature type="topological domain" description="Cytoplasmic" evidence="1">
    <location>
        <begin position="1"/>
        <end position="54"/>
    </location>
</feature>
<feature type="transmembrane region" description="Helical" evidence="1">
    <location>
        <begin position="55"/>
        <end position="75"/>
    </location>
</feature>
<feature type="topological domain" description="Lumenal" evidence="1">
    <location>
        <begin position="76"/>
        <end position="88"/>
    </location>
</feature>
<feature type="transmembrane region" description="Helical" evidence="1">
    <location>
        <begin position="89"/>
        <end position="109"/>
    </location>
</feature>
<feature type="topological domain" description="Cytoplasmic" evidence="1">
    <location>
        <begin position="110"/>
        <end position="140"/>
    </location>
</feature>
<feature type="transmembrane region" description="Helical" evidence="1">
    <location>
        <begin position="141"/>
        <end position="161"/>
    </location>
</feature>
<feature type="topological domain" description="Lumenal" evidence="1">
    <location>
        <begin position="162"/>
        <end position="175"/>
    </location>
</feature>
<feature type="transmembrane region" description="Helical" evidence="1">
    <location>
        <begin position="176"/>
        <end position="196"/>
    </location>
</feature>
<feature type="topological domain" description="Cytoplasmic" evidence="1">
    <location>
        <begin position="197"/>
        <end position="201"/>
    </location>
</feature>
<feature type="transmembrane region" description="Helical" evidence="1">
    <location>
        <begin position="202"/>
        <end position="222"/>
    </location>
</feature>
<feature type="topological domain" description="Lumenal" evidence="1">
    <location>
        <begin position="223"/>
        <end position="235"/>
    </location>
</feature>
<comment type="function">
    <text evidence="2">Has a role in meiosis.</text>
</comment>
<comment type="subcellular location">
    <subcellularLocation>
        <location evidence="3">Endoplasmic reticulum membrane</location>
        <topology evidence="3">Multi-pass membrane protein</topology>
    </subcellularLocation>
</comment>
<comment type="similarity">
    <text evidence="4">Belongs to the unc-50 family.</text>
</comment>
<name>MUG16_SCHPO</name>